<dbReference type="EC" id="1.5.1.5" evidence="1"/>
<dbReference type="EC" id="3.5.4.9" evidence="1"/>
<dbReference type="EMBL" id="CP000521">
    <property type="protein sequence ID" value="ABO13090.2"/>
    <property type="molecule type" value="Genomic_DNA"/>
</dbReference>
<dbReference type="RefSeq" id="WP_001229846.1">
    <property type="nucleotide sequence ID" value="NZ_CP053098.1"/>
</dbReference>
<dbReference type="SMR" id="A3M846"/>
<dbReference type="GeneID" id="92894950"/>
<dbReference type="KEGG" id="acb:A1S_2674"/>
<dbReference type="HOGENOM" id="CLU_034045_2_1_6"/>
<dbReference type="UniPathway" id="UPA00193"/>
<dbReference type="GO" id="GO:0005829">
    <property type="term" value="C:cytosol"/>
    <property type="evidence" value="ECO:0007669"/>
    <property type="project" value="TreeGrafter"/>
</dbReference>
<dbReference type="GO" id="GO:0004477">
    <property type="term" value="F:methenyltetrahydrofolate cyclohydrolase activity"/>
    <property type="evidence" value="ECO:0007669"/>
    <property type="project" value="UniProtKB-UniRule"/>
</dbReference>
<dbReference type="GO" id="GO:0004488">
    <property type="term" value="F:methylenetetrahydrofolate dehydrogenase (NADP+) activity"/>
    <property type="evidence" value="ECO:0007669"/>
    <property type="project" value="UniProtKB-UniRule"/>
</dbReference>
<dbReference type="GO" id="GO:0000105">
    <property type="term" value="P:L-histidine biosynthetic process"/>
    <property type="evidence" value="ECO:0007669"/>
    <property type="project" value="UniProtKB-KW"/>
</dbReference>
<dbReference type="GO" id="GO:0009086">
    <property type="term" value="P:methionine biosynthetic process"/>
    <property type="evidence" value="ECO:0007669"/>
    <property type="project" value="UniProtKB-KW"/>
</dbReference>
<dbReference type="GO" id="GO:0006164">
    <property type="term" value="P:purine nucleotide biosynthetic process"/>
    <property type="evidence" value="ECO:0007669"/>
    <property type="project" value="UniProtKB-KW"/>
</dbReference>
<dbReference type="GO" id="GO:0035999">
    <property type="term" value="P:tetrahydrofolate interconversion"/>
    <property type="evidence" value="ECO:0007669"/>
    <property type="project" value="UniProtKB-UniRule"/>
</dbReference>
<dbReference type="CDD" id="cd01080">
    <property type="entry name" value="NAD_bind_m-THF_DH_Cyclohyd"/>
    <property type="match status" value="1"/>
</dbReference>
<dbReference type="FunFam" id="3.40.50.720:FF:000094">
    <property type="entry name" value="Bifunctional protein FolD"/>
    <property type="match status" value="1"/>
</dbReference>
<dbReference type="FunFam" id="3.40.50.10860:FF:000005">
    <property type="entry name" value="C-1-tetrahydrofolate synthase, cytoplasmic, putative"/>
    <property type="match status" value="1"/>
</dbReference>
<dbReference type="Gene3D" id="3.40.50.10860">
    <property type="entry name" value="Leucine Dehydrogenase, chain A, domain 1"/>
    <property type="match status" value="1"/>
</dbReference>
<dbReference type="Gene3D" id="3.40.50.720">
    <property type="entry name" value="NAD(P)-binding Rossmann-like Domain"/>
    <property type="match status" value="1"/>
</dbReference>
<dbReference type="HAMAP" id="MF_01576">
    <property type="entry name" value="THF_DHG_CYH"/>
    <property type="match status" value="1"/>
</dbReference>
<dbReference type="InterPro" id="IPR046346">
    <property type="entry name" value="Aminoacid_DH-like_N_sf"/>
</dbReference>
<dbReference type="InterPro" id="IPR036291">
    <property type="entry name" value="NAD(P)-bd_dom_sf"/>
</dbReference>
<dbReference type="InterPro" id="IPR000672">
    <property type="entry name" value="THF_DH/CycHdrlase"/>
</dbReference>
<dbReference type="InterPro" id="IPR020630">
    <property type="entry name" value="THF_DH/CycHdrlase_cat_dom"/>
</dbReference>
<dbReference type="InterPro" id="IPR020867">
    <property type="entry name" value="THF_DH/CycHdrlase_CS"/>
</dbReference>
<dbReference type="InterPro" id="IPR020631">
    <property type="entry name" value="THF_DH/CycHdrlase_NAD-bd_dom"/>
</dbReference>
<dbReference type="NCBIfam" id="NF010788">
    <property type="entry name" value="PRK14192.1"/>
    <property type="match status" value="1"/>
</dbReference>
<dbReference type="PANTHER" id="PTHR48099:SF5">
    <property type="entry name" value="C-1-TETRAHYDROFOLATE SYNTHASE, CYTOPLASMIC"/>
    <property type="match status" value="1"/>
</dbReference>
<dbReference type="PANTHER" id="PTHR48099">
    <property type="entry name" value="C-1-TETRAHYDROFOLATE SYNTHASE, CYTOPLASMIC-RELATED"/>
    <property type="match status" value="1"/>
</dbReference>
<dbReference type="Pfam" id="PF00763">
    <property type="entry name" value="THF_DHG_CYH"/>
    <property type="match status" value="1"/>
</dbReference>
<dbReference type="Pfam" id="PF02882">
    <property type="entry name" value="THF_DHG_CYH_C"/>
    <property type="match status" value="1"/>
</dbReference>
<dbReference type="PRINTS" id="PR00085">
    <property type="entry name" value="THFDHDRGNASE"/>
</dbReference>
<dbReference type="SUPFAM" id="SSF53223">
    <property type="entry name" value="Aminoacid dehydrogenase-like, N-terminal domain"/>
    <property type="match status" value="1"/>
</dbReference>
<dbReference type="SUPFAM" id="SSF51735">
    <property type="entry name" value="NAD(P)-binding Rossmann-fold domains"/>
    <property type="match status" value="1"/>
</dbReference>
<dbReference type="PROSITE" id="PS00767">
    <property type="entry name" value="THF_DHG_CYH_2"/>
    <property type="match status" value="1"/>
</dbReference>
<evidence type="ECO:0000255" key="1">
    <source>
        <dbReference type="HAMAP-Rule" id="MF_01576"/>
    </source>
</evidence>
<sequence>MALVLDGRALAKQIEENLLVRVEALKAKTGRTPILATILVGDDGASATYVRMKGNACRRVGMDSLKIELPQETTTEQLLAEIEKLNANPDVHGILLQHPVPAQIDERACFDAISLAKDVDGVTCLGFGRMAMGEAAYGSATPAGIMTILKENNIEIAGKHAVVVGRSAILGKPMAMMLLQANATVTICHSRTQNLPELVKQADIIVGAVGKAELIQKDWIKQGAVVVDAGFHPRDGGGVGDIQLQGIEEIASAYTPVPGGVGPMTITTLIRQTVEAAEKALG</sequence>
<comment type="function">
    <text evidence="1">Catalyzes the oxidation of 5,10-methylenetetrahydrofolate to 5,10-methenyltetrahydrofolate and then the hydrolysis of 5,10-methenyltetrahydrofolate to 10-formyltetrahydrofolate.</text>
</comment>
<comment type="catalytic activity">
    <reaction evidence="1">
        <text>(6R)-5,10-methylene-5,6,7,8-tetrahydrofolate + NADP(+) = (6R)-5,10-methenyltetrahydrofolate + NADPH</text>
        <dbReference type="Rhea" id="RHEA:22812"/>
        <dbReference type="ChEBI" id="CHEBI:15636"/>
        <dbReference type="ChEBI" id="CHEBI:57455"/>
        <dbReference type="ChEBI" id="CHEBI:57783"/>
        <dbReference type="ChEBI" id="CHEBI:58349"/>
        <dbReference type="EC" id="1.5.1.5"/>
    </reaction>
</comment>
<comment type="catalytic activity">
    <reaction evidence="1">
        <text>(6R)-5,10-methenyltetrahydrofolate + H2O = (6R)-10-formyltetrahydrofolate + H(+)</text>
        <dbReference type="Rhea" id="RHEA:23700"/>
        <dbReference type="ChEBI" id="CHEBI:15377"/>
        <dbReference type="ChEBI" id="CHEBI:15378"/>
        <dbReference type="ChEBI" id="CHEBI:57455"/>
        <dbReference type="ChEBI" id="CHEBI:195366"/>
        <dbReference type="EC" id="3.5.4.9"/>
    </reaction>
</comment>
<comment type="pathway">
    <text evidence="1">One-carbon metabolism; tetrahydrofolate interconversion.</text>
</comment>
<comment type="subunit">
    <text evidence="1">Homodimer.</text>
</comment>
<comment type="similarity">
    <text evidence="1">Belongs to the tetrahydrofolate dehydrogenase/cyclohydrolase family.</text>
</comment>
<reference key="1">
    <citation type="journal article" date="2007" name="Genes Dev.">
        <title>New insights into Acinetobacter baumannii pathogenesis revealed by high-density pyrosequencing and transposon mutagenesis.</title>
        <authorList>
            <person name="Smith M.G."/>
            <person name="Gianoulis T.A."/>
            <person name="Pukatzki S."/>
            <person name="Mekalanos J.J."/>
            <person name="Ornston L.N."/>
            <person name="Gerstein M."/>
            <person name="Snyder M."/>
        </authorList>
    </citation>
    <scope>NUCLEOTIDE SEQUENCE [LARGE SCALE GENOMIC DNA]</scope>
    <source>
        <strain>ATCC 17978 / DSM 105126 / CIP 53.77 / LMG 1025 / NCDC KC755 / 5377</strain>
    </source>
</reference>
<protein>
    <recommendedName>
        <fullName evidence="1">Bifunctional protein FolD</fullName>
    </recommendedName>
    <domain>
        <recommendedName>
            <fullName evidence="1">Methylenetetrahydrofolate dehydrogenase</fullName>
            <ecNumber evidence="1">1.5.1.5</ecNumber>
        </recommendedName>
    </domain>
    <domain>
        <recommendedName>
            <fullName evidence="1">Methenyltetrahydrofolate cyclohydrolase</fullName>
            <ecNumber evidence="1">3.5.4.9</ecNumber>
        </recommendedName>
    </domain>
</protein>
<keyword id="KW-0028">Amino-acid biosynthesis</keyword>
<keyword id="KW-0368">Histidine biosynthesis</keyword>
<keyword id="KW-0378">Hydrolase</keyword>
<keyword id="KW-0486">Methionine biosynthesis</keyword>
<keyword id="KW-0511">Multifunctional enzyme</keyword>
<keyword id="KW-0521">NADP</keyword>
<keyword id="KW-0554">One-carbon metabolism</keyword>
<keyword id="KW-0560">Oxidoreductase</keyword>
<keyword id="KW-0658">Purine biosynthesis</keyword>
<feature type="chain" id="PRO_0000305786" description="Bifunctional protein FolD">
    <location>
        <begin position="1"/>
        <end position="282"/>
    </location>
</feature>
<feature type="binding site" evidence="1">
    <location>
        <begin position="165"/>
        <end position="167"/>
    </location>
    <ligand>
        <name>NADP(+)</name>
        <dbReference type="ChEBI" id="CHEBI:58349"/>
    </ligand>
</feature>
<feature type="binding site" evidence="1">
    <location>
        <position position="190"/>
    </location>
    <ligand>
        <name>NADP(+)</name>
        <dbReference type="ChEBI" id="CHEBI:58349"/>
    </ligand>
</feature>
<organism>
    <name type="scientific">Acinetobacter baumannii (strain ATCC 17978 / DSM 105126 / CIP 53.77 / LMG 1025 / NCDC KC755 / 5377)</name>
    <dbReference type="NCBI Taxonomy" id="400667"/>
    <lineage>
        <taxon>Bacteria</taxon>
        <taxon>Pseudomonadati</taxon>
        <taxon>Pseudomonadota</taxon>
        <taxon>Gammaproteobacteria</taxon>
        <taxon>Moraxellales</taxon>
        <taxon>Moraxellaceae</taxon>
        <taxon>Acinetobacter</taxon>
        <taxon>Acinetobacter calcoaceticus/baumannii complex</taxon>
    </lineage>
</organism>
<name>FOLD_ACIBT</name>
<proteinExistence type="inferred from homology"/>
<accession>A3M846</accession>
<gene>
    <name evidence="1" type="primary">folD</name>
    <name type="ordered locus">A1S_2674</name>
</gene>